<feature type="chain" id="PRO_1000129639" description="Co-chaperonin GroES">
    <location>
        <begin position="1"/>
        <end position="102"/>
    </location>
</feature>
<sequence>MSDQATTLKIKPLGDRILVKREEEASTARGGIILPDTAKKKQDRAEVVALGTGKKDDKGQQLPFEVQVGDIVLIDKYSGQELTVEGEEYVIVQMSEVIAVLQ</sequence>
<gene>
    <name evidence="1" type="primary">groES</name>
    <name evidence="1" type="synonym">groS</name>
    <name type="ordered locus">CTLon_0362</name>
</gene>
<proteinExistence type="inferred from homology"/>
<reference key="1">
    <citation type="journal article" date="2008" name="Genome Res.">
        <title>Chlamydia trachomatis: genome sequence analysis of lymphogranuloma venereum isolates.</title>
        <authorList>
            <person name="Thomson N.R."/>
            <person name="Holden M.T.G."/>
            <person name="Carder C."/>
            <person name="Lennard N."/>
            <person name="Lockey S.J."/>
            <person name="Marsh P."/>
            <person name="Skipp P."/>
            <person name="O'Connor C.D."/>
            <person name="Goodhead I."/>
            <person name="Norbertzcak H."/>
            <person name="Harris B."/>
            <person name="Ormond D."/>
            <person name="Rance R."/>
            <person name="Quail M.A."/>
            <person name="Parkhill J."/>
            <person name="Stephens R.S."/>
            <person name="Clarke I.N."/>
        </authorList>
    </citation>
    <scope>NUCLEOTIDE SEQUENCE [LARGE SCALE GENOMIC DNA]</scope>
    <source>
        <strain>UCH-1/proctitis</strain>
    </source>
</reference>
<organism>
    <name type="scientific">Chlamydia trachomatis serovar L2b (strain UCH-1/proctitis)</name>
    <dbReference type="NCBI Taxonomy" id="471473"/>
    <lineage>
        <taxon>Bacteria</taxon>
        <taxon>Pseudomonadati</taxon>
        <taxon>Chlamydiota</taxon>
        <taxon>Chlamydiia</taxon>
        <taxon>Chlamydiales</taxon>
        <taxon>Chlamydiaceae</taxon>
        <taxon>Chlamydia/Chlamydophila group</taxon>
        <taxon>Chlamydia</taxon>
    </lineage>
</organism>
<evidence type="ECO:0000255" key="1">
    <source>
        <dbReference type="HAMAP-Rule" id="MF_00580"/>
    </source>
</evidence>
<protein>
    <recommendedName>
        <fullName evidence="1">Co-chaperonin GroES</fullName>
    </recommendedName>
    <alternativeName>
        <fullName evidence="1">10 kDa chaperonin</fullName>
    </alternativeName>
    <alternativeName>
        <fullName evidence="1">Chaperonin-10</fullName>
        <shortName evidence="1">Cpn10</shortName>
    </alternativeName>
</protein>
<accession>B0BB98</accession>
<dbReference type="EMBL" id="AM884177">
    <property type="protein sequence ID" value="CAP06760.1"/>
    <property type="molecule type" value="Genomic_DNA"/>
</dbReference>
<dbReference type="RefSeq" id="WP_009873566.1">
    <property type="nucleotide sequence ID" value="NC_010280.2"/>
</dbReference>
<dbReference type="SMR" id="B0BB98"/>
<dbReference type="KEGG" id="ctl:CTLon_0362"/>
<dbReference type="HOGENOM" id="CLU_132825_2_1_0"/>
<dbReference type="Proteomes" id="UP001154401">
    <property type="component" value="Chromosome"/>
</dbReference>
<dbReference type="GO" id="GO:0005737">
    <property type="term" value="C:cytoplasm"/>
    <property type="evidence" value="ECO:0007669"/>
    <property type="project" value="UniProtKB-SubCell"/>
</dbReference>
<dbReference type="GO" id="GO:0005524">
    <property type="term" value="F:ATP binding"/>
    <property type="evidence" value="ECO:0007669"/>
    <property type="project" value="InterPro"/>
</dbReference>
<dbReference type="GO" id="GO:0046872">
    <property type="term" value="F:metal ion binding"/>
    <property type="evidence" value="ECO:0007669"/>
    <property type="project" value="TreeGrafter"/>
</dbReference>
<dbReference type="GO" id="GO:0044183">
    <property type="term" value="F:protein folding chaperone"/>
    <property type="evidence" value="ECO:0007669"/>
    <property type="project" value="InterPro"/>
</dbReference>
<dbReference type="GO" id="GO:0051087">
    <property type="term" value="F:protein-folding chaperone binding"/>
    <property type="evidence" value="ECO:0007669"/>
    <property type="project" value="TreeGrafter"/>
</dbReference>
<dbReference type="GO" id="GO:0051082">
    <property type="term" value="F:unfolded protein binding"/>
    <property type="evidence" value="ECO:0007669"/>
    <property type="project" value="TreeGrafter"/>
</dbReference>
<dbReference type="GO" id="GO:0051085">
    <property type="term" value="P:chaperone cofactor-dependent protein refolding"/>
    <property type="evidence" value="ECO:0007669"/>
    <property type="project" value="TreeGrafter"/>
</dbReference>
<dbReference type="CDD" id="cd00320">
    <property type="entry name" value="cpn10"/>
    <property type="match status" value="1"/>
</dbReference>
<dbReference type="FunFam" id="2.30.33.40:FF:000007">
    <property type="entry name" value="10 kDa chaperonin"/>
    <property type="match status" value="1"/>
</dbReference>
<dbReference type="Gene3D" id="2.30.33.40">
    <property type="entry name" value="GroES chaperonin"/>
    <property type="match status" value="1"/>
</dbReference>
<dbReference type="HAMAP" id="MF_00580">
    <property type="entry name" value="CH10"/>
    <property type="match status" value="1"/>
</dbReference>
<dbReference type="InterPro" id="IPR020818">
    <property type="entry name" value="Chaperonin_GroES"/>
</dbReference>
<dbReference type="InterPro" id="IPR037124">
    <property type="entry name" value="Chaperonin_GroES_sf"/>
</dbReference>
<dbReference type="InterPro" id="IPR018369">
    <property type="entry name" value="Chaprnonin_Cpn10_CS"/>
</dbReference>
<dbReference type="InterPro" id="IPR011032">
    <property type="entry name" value="GroES-like_sf"/>
</dbReference>
<dbReference type="NCBIfam" id="NF001531">
    <property type="entry name" value="PRK00364.2-2"/>
    <property type="match status" value="1"/>
</dbReference>
<dbReference type="NCBIfam" id="NF001533">
    <property type="entry name" value="PRK00364.2-4"/>
    <property type="match status" value="1"/>
</dbReference>
<dbReference type="PANTHER" id="PTHR10772">
    <property type="entry name" value="10 KDA HEAT SHOCK PROTEIN"/>
    <property type="match status" value="1"/>
</dbReference>
<dbReference type="PANTHER" id="PTHR10772:SF58">
    <property type="entry name" value="CO-CHAPERONIN GROES"/>
    <property type="match status" value="1"/>
</dbReference>
<dbReference type="Pfam" id="PF00166">
    <property type="entry name" value="Cpn10"/>
    <property type="match status" value="1"/>
</dbReference>
<dbReference type="PRINTS" id="PR00297">
    <property type="entry name" value="CHAPERONIN10"/>
</dbReference>
<dbReference type="SMART" id="SM00883">
    <property type="entry name" value="Cpn10"/>
    <property type="match status" value="1"/>
</dbReference>
<dbReference type="SUPFAM" id="SSF50129">
    <property type="entry name" value="GroES-like"/>
    <property type="match status" value="1"/>
</dbReference>
<dbReference type="PROSITE" id="PS00681">
    <property type="entry name" value="CHAPERONINS_CPN10"/>
    <property type="match status" value="1"/>
</dbReference>
<keyword id="KW-0143">Chaperone</keyword>
<keyword id="KW-0963">Cytoplasm</keyword>
<name>CH10_CHLTB</name>
<comment type="function">
    <text evidence="1">Together with the chaperonin GroEL, plays an essential role in assisting protein folding. The GroEL-GroES system forms a nano-cage that allows encapsulation of the non-native substrate proteins and provides a physical environment optimized to promote and accelerate protein folding. GroES binds to the apical surface of the GroEL ring, thereby capping the opening of the GroEL channel.</text>
</comment>
<comment type="subunit">
    <text evidence="1">Heptamer of 7 subunits arranged in a ring. Interacts with the chaperonin GroEL.</text>
</comment>
<comment type="subcellular location">
    <subcellularLocation>
        <location evidence="1">Cytoplasm</location>
    </subcellularLocation>
</comment>
<comment type="similarity">
    <text evidence="1">Belongs to the GroES chaperonin family.</text>
</comment>